<comment type="function">
    <text evidence="1">Catalyzes the reduction of nitrite to ammonia, consuming six electrons in the process.</text>
</comment>
<comment type="catalytic activity">
    <reaction evidence="1">
        <text>6 Fe(III)-[cytochrome c] + NH4(+) + 2 H2O = 6 Fe(II)-[cytochrome c] + nitrite + 8 H(+)</text>
        <dbReference type="Rhea" id="RHEA:13089"/>
        <dbReference type="Rhea" id="RHEA-COMP:10350"/>
        <dbReference type="Rhea" id="RHEA-COMP:14399"/>
        <dbReference type="ChEBI" id="CHEBI:15377"/>
        <dbReference type="ChEBI" id="CHEBI:15378"/>
        <dbReference type="ChEBI" id="CHEBI:16301"/>
        <dbReference type="ChEBI" id="CHEBI:28938"/>
        <dbReference type="ChEBI" id="CHEBI:29033"/>
        <dbReference type="ChEBI" id="CHEBI:29034"/>
        <dbReference type="EC" id="1.7.2.2"/>
    </reaction>
</comment>
<comment type="cofactor">
    <cofactor evidence="1">
        <name>Ca(2+)</name>
        <dbReference type="ChEBI" id="CHEBI:29108"/>
    </cofactor>
    <text evidence="1">Binds 1 Ca(2+) ion per monomer.</text>
</comment>
<comment type="cofactor">
    <cofactor evidence="1">
        <name>heme c</name>
        <dbReference type="ChEBI" id="CHEBI:61717"/>
    </cofactor>
    <text evidence="1">Binds 5 heme c groups covalently per monomer.</text>
</comment>
<comment type="pathway">
    <text evidence="1">Nitrogen metabolism; nitrate reduction (assimilation).</text>
</comment>
<comment type="subcellular location">
    <subcellularLocation>
        <location evidence="1">Periplasm</location>
    </subcellularLocation>
</comment>
<comment type="similarity">
    <text evidence="1">Belongs to the cytochrome c-552 family.</text>
</comment>
<feature type="signal peptide" evidence="1">
    <location>
        <begin position="1"/>
        <end position="23"/>
    </location>
</feature>
<feature type="chain" id="PRO_0000268961" description="Cytochrome c-552">
    <location>
        <begin position="24"/>
        <end position="508"/>
    </location>
</feature>
<feature type="region of interest" description="Disordered" evidence="2">
    <location>
        <begin position="485"/>
        <end position="508"/>
    </location>
</feature>
<feature type="compositionally biased region" description="Polar residues" evidence="2">
    <location>
        <begin position="494"/>
        <end position="508"/>
    </location>
</feature>
<feature type="binding site" description="axial binding residue" evidence="1">
    <location>
        <position position="103"/>
    </location>
    <ligand>
        <name>heme c</name>
        <dbReference type="ChEBI" id="CHEBI:61717"/>
        <label>3</label>
    </ligand>
    <ligandPart>
        <name>Fe</name>
        <dbReference type="ChEBI" id="CHEBI:18248"/>
    </ligandPart>
</feature>
<feature type="binding site" description="covalent" evidence="1">
    <location>
        <position position="131"/>
    </location>
    <ligand>
        <name>heme</name>
        <dbReference type="ChEBI" id="CHEBI:30413"/>
        <label>1</label>
    </ligand>
</feature>
<feature type="binding site" description="covalent" evidence="1">
    <location>
        <position position="134"/>
    </location>
    <ligand>
        <name>heme</name>
        <dbReference type="ChEBI" id="CHEBI:30413"/>
        <label>1</label>
    </ligand>
</feature>
<feature type="binding site" description="axial binding residue" evidence="1">
    <location>
        <position position="135"/>
    </location>
    <ligand>
        <name>heme</name>
        <dbReference type="ChEBI" id="CHEBI:30413"/>
        <label>1</label>
    </ligand>
    <ligandPart>
        <name>Fe</name>
        <dbReference type="ChEBI" id="CHEBI:18248"/>
    </ligandPart>
</feature>
<feature type="binding site" description="covalent" evidence="1">
    <location>
        <position position="169"/>
    </location>
    <ligand>
        <name>heme c</name>
        <dbReference type="ChEBI" id="CHEBI:61717"/>
        <label>2</label>
    </ligand>
</feature>
<feature type="binding site" description="covalent" evidence="1">
    <location>
        <position position="172"/>
    </location>
    <ligand>
        <name>heme c</name>
        <dbReference type="ChEBI" id="CHEBI:61717"/>
        <label>2</label>
    </ligand>
</feature>
<feature type="binding site" description="axial binding residue" evidence="1">
    <location>
        <position position="173"/>
    </location>
    <ligand>
        <name>heme c</name>
        <dbReference type="ChEBI" id="CHEBI:61717"/>
        <label>2</label>
    </ligand>
    <ligandPart>
        <name>Fe</name>
        <dbReference type="ChEBI" id="CHEBI:18248"/>
    </ligandPart>
</feature>
<feature type="binding site" description="covalent" evidence="1">
    <location>
        <position position="211"/>
    </location>
    <ligand>
        <name>heme c</name>
        <dbReference type="ChEBI" id="CHEBI:61717"/>
        <label>3</label>
    </ligand>
</feature>
<feature type="binding site" description="covalent" evidence="1">
    <location>
        <position position="214"/>
    </location>
    <ligand>
        <name>heme c</name>
        <dbReference type="ChEBI" id="CHEBI:61717"/>
        <label>3</label>
    </ligand>
</feature>
<feature type="binding site" description="axial binding residue" evidence="1">
    <location>
        <position position="215"/>
    </location>
    <ligand>
        <name>heme c</name>
        <dbReference type="ChEBI" id="CHEBI:61717"/>
        <label>3</label>
    </ligand>
    <ligandPart>
        <name>Fe</name>
        <dbReference type="ChEBI" id="CHEBI:18248"/>
    </ligandPart>
</feature>
<feature type="binding site" evidence="1">
    <location>
        <position position="217"/>
    </location>
    <ligand>
        <name>Ca(2+)</name>
        <dbReference type="ChEBI" id="CHEBI:29108"/>
    </ligand>
</feature>
<feature type="binding site" evidence="1">
    <location>
        <position position="218"/>
    </location>
    <ligand>
        <name>Ca(2+)</name>
        <dbReference type="ChEBI" id="CHEBI:29108"/>
    </ligand>
</feature>
<feature type="binding site" evidence="1">
    <location>
        <position position="218"/>
    </location>
    <ligand>
        <name>substrate</name>
    </ligand>
</feature>
<feature type="binding site" evidence="1">
    <location>
        <position position="274"/>
    </location>
    <ligand>
        <name>Ca(2+)</name>
        <dbReference type="ChEBI" id="CHEBI:29108"/>
    </ligand>
</feature>
<feature type="binding site" evidence="1">
    <location>
        <position position="276"/>
    </location>
    <ligand>
        <name>Ca(2+)</name>
        <dbReference type="ChEBI" id="CHEBI:29108"/>
    </ligand>
</feature>
<feature type="binding site" evidence="1">
    <location>
        <position position="277"/>
    </location>
    <ligand>
        <name>substrate</name>
    </ligand>
</feature>
<feature type="binding site" description="axial binding residue" evidence="1">
    <location>
        <position position="288"/>
    </location>
    <ligand>
        <name>heme c</name>
        <dbReference type="ChEBI" id="CHEBI:61717"/>
        <label>5</label>
    </ligand>
    <ligandPart>
        <name>Fe</name>
        <dbReference type="ChEBI" id="CHEBI:18248"/>
    </ligandPart>
</feature>
<feature type="binding site" description="covalent" evidence="1">
    <location>
        <position position="295"/>
    </location>
    <ligand>
        <name>heme c</name>
        <dbReference type="ChEBI" id="CHEBI:61717"/>
        <label>4</label>
    </ligand>
</feature>
<feature type="binding site" description="covalent" evidence="1">
    <location>
        <position position="298"/>
    </location>
    <ligand>
        <name>heme c</name>
        <dbReference type="ChEBI" id="CHEBI:61717"/>
        <label>4</label>
    </ligand>
</feature>
<feature type="binding site" description="axial binding residue" evidence="1">
    <location>
        <position position="299"/>
    </location>
    <ligand>
        <name>heme c</name>
        <dbReference type="ChEBI" id="CHEBI:61717"/>
        <label>4</label>
    </ligand>
    <ligandPart>
        <name>Fe</name>
        <dbReference type="ChEBI" id="CHEBI:18248"/>
    </ligandPart>
</feature>
<feature type="binding site" description="axial binding residue" evidence="1">
    <location>
        <position position="313"/>
    </location>
    <ligand>
        <name>heme c</name>
        <dbReference type="ChEBI" id="CHEBI:61717"/>
        <label>2</label>
    </ligand>
    <ligandPart>
        <name>Fe</name>
        <dbReference type="ChEBI" id="CHEBI:18248"/>
    </ligandPart>
</feature>
<feature type="binding site" description="covalent" evidence="1">
    <location>
        <position position="326"/>
    </location>
    <ligand>
        <name>heme c</name>
        <dbReference type="ChEBI" id="CHEBI:61717"/>
        <label>5</label>
    </ligand>
</feature>
<feature type="binding site" description="covalent" evidence="1">
    <location>
        <position position="329"/>
    </location>
    <ligand>
        <name>heme c</name>
        <dbReference type="ChEBI" id="CHEBI:61717"/>
        <label>5</label>
    </ligand>
</feature>
<feature type="binding site" description="axial binding residue" evidence="1">
    <location>
        <position position="330"/>
    </location>
    <ligand>
        <name>heme c</name>
        <dbReference type="ChEBI" id="CHEBI:61717"/>
        <label>5</label>
    </ligand>
    <ligandPart>
        <name>Fe</name>
        <dbReference type="ChEBI" id="CHEBI:18248"/>
    </ligandPart>
</feature>
<feature type="binding site" description="axial binding residue" evidence="1">
    <location>
        <position position="405"/>
    </location>
    <ligand>
        <name>heme c</name>
        <dbReference type="ChEBI" id="CHEBI:61717"/>
        <label>4</label>
    </ligand>
    <ligandPart>
        <name>Fe</name>
        <dbReference type="ChEBI" id="CHEBI:18248"/>
    </ligandPart>
</feature>
<gene>
    <name evidence="1" type="primary">nrfA</name>
    <name type="ordered locus">DP0344</name>
</gene>
<keyword id="KW-0106">Calcium</keyword>
<keyword id="KW-0249">Electron transport</keyword>
<keyword id="KW-0349">Heme</keyword>
<keyword id="KW-0408">Iron</keyword>
<keyword id="KW-0479">Metal-binding</keyword>
<keyword id="KW-0560">Oxidoreductase</keyword>
<keyword id="KW-0574">Periplasm</keyword>
<keyword id="KW-1185">Reference proteome</keyword>
<keyword id="KW-0732">Signal</keyword>
<keyword id="KW-0813">Transport</keyword>
<evidence type="ECO:0000255" key="1">
    <source>
        <dbReference type="HAMAP-Rule" id="MF_01182"/>
    </source>
</evidence>
<evidence type="ECO:0000256" key="2">
    <source>
        <dbReference type="SAM" id="MobiDB-lite"/>
    </source>
</evidence>
<dbReference type="EC" id="1.7.2.2" evidence="1"/>
<dbReference type="EMBL" id="CR522870">
    <property type="protein sequence ID" value="CAG35073.1"/>
    <property type="molecule type" value="Genomic_DNA"/>
</dbReference>
<dbReference type="RefSeq" id="WP_011187589.1">
    <property type="nucleotide sequence ID" value="NC_006138.1"/>
</dbReference>
<dbReference type="SMR" id="Q6ARF1"/>
<dbReference type="STRING" id="177439.DP0344"/>
<dbReference type="KEGG" id="dps:DP0344"/>
<dbReference type="eggNOG" id="COG3303">
    <property type="taxonomic scope" value="Bacteria"/>
</dbReference>
<dbReference type="HOGENOM" id="CLU_035040_1_0_7"/>
<dbReference type="OrthoDB" id="9780421at2"/>
<dbReference type="UniPathway" id="UPA00653"/>
<dbReference type="Proteomes" id="UP000000602">
    <property type="component" value="Chromosome"/>
</dbReference>
<dbReference type="GO" id="GO:0030288">
    <property type="term" value="C:outer membrane-bounded periplasmic space"/>
    <property type="evidence" value="ECO:0007669"/>
    <property type="project" value="TreeGrafter"/>
</dbReference>
<dbReference type="GO" id="GO:0005509">
    <property type="term" value="F:calcium ion binding"/>
    <property type="evidence" value="ECO:0007669"/>
    <property type="project" value="InterPro"/>
</dbReference>
<dbReference type="GO" id="GO:0020037">
    <property type="term" value="F:heme binding"/>
    <property type="evidence" value="ECO:0007669"/>
    <property type="project" value="InterPro"/>
</dbReference>
<dbReference type="GO" id="GO:0042279">
    <property type="term" value="F:nitrite reductase (cytochrome, ammonia-forming) activity"/>
    <property type="evidence" value="ECO:0007669"/>
    <property type="project" value="UniProtKB-EC"/>
</dbReference>
<dbReference type="GO" id="GO:0019645">
    <property type="term" value="P:anaerobic electron transport chain"/>
    <property type="evidence" value="ECO:0007669"/>
    <property type="project" value="TreeGrafter"/>
</dbReference>
<dbReference type="GO" id="GO:0042128">
    <property type="term" value="P:nitrate assimilation"/>
    <property type="evidence" value="ECO:0007669"/>
    <property type="project" value="UniProtKB-UniPathway"/>
</dbReference>
<dbReference type="CDD" id="cd00548">
    <property type="entry name" value="NrfA-like"/>
    <property type="match status" value="1"/>
</dbReference>
<dbReference type="Gene3D" id="1.20.140.10">
    <property type="entry name" value="Butyryl-CoA Dehydrogenase, subunit A, domain 3"/>
    <property type="match status" value="1"/>
</dbReference>
<dbReference type="Gene3D" id="1.10.1130.10">
    <property type="entry name" value="Flavocytochrome C3, Chain A"/>
    <property type="match status" value="1"/>
</dbReference>
<dbReference type="HAMAP" id="MF_01182">
    <property type="entry name" value="Cytochrom_C552"/>
    <property type="match status" value="1"/>
</dbReference>
<dbReference type="InterPro" id="IPR003321">
    <property type="entry name" value="Cyt_c552"/>
</dbReference>
<dbReference type="InterPro" id="IPR017570">
    <property type="entry name" value="Cyt_c_NO2Rdtase_formate-dep"/>
</dbReference>
<dbReference type="InterPro" id="IPR036280">
    <property type="entry name" value="Multihaem_cyt_sf"/>
</dbReference>
<dbReference type="NCBIfam" id="NF008339">
    <property type="entry name" value="PRK11125.1"/>
    <property type="match status" value="1"/>
</dbReference>
<dbReference type="PANTHER" id="PTHR30633:SF0">
    <property type="entry name" value="CYTOCHROME C-552"/>
    <property type="match status" value="1"/>
</dbReference>
<dbReference type="PANTHER" id="PTHR30633">
    <property type="entry name" value="CYTOCHROME C-552 RESPIRATORY NITRITE REDUCTASE"/>
    <property type="match status" value="1"/>
</dbReference>
<dbReference type="Pfam" id="PF02335">
    <property type="entry name" value="Cytochrom_C552"/>
    <property type="match status" value="1"/>
</dbReference>
<dbReference type="PIRSF" id="PIRSF000243">
    <property type="entry name" value="Cyt_c552"/>
    <property type="match status" value="1"/>
</dbReference>
<dbReference type="SUPFAM" id="SSF48695">
    <property type="entry name" value="Multiheme cytochromes"/>
    <property type="match status" value="1"/>
</dbReference>
<dbReference type="PROSITE" id="PS51008">
    <property type="entry name" value="MULTIHEME_CYTC"/>
    <property type="match status" value="1"/>
</dbReference>
<reference key="1">
    <citation type="journal article" date="2004" name="Environ. Microbiol.">
        <title>The genome of Desulfotalea psychrophila, a sulfate-reducing bacterium from permanently cold Arctic sediments.</title>
        <authorList>
            <person name="Rabus R."/>
            <person name="Ruepp A."/>
            <person name="Frickey T."/>
            <person name="Rattei T."/>
            <person name="Fartmann B."/>
            <person name="Stark M."/>
            <person name="Bauer M."/>
            <person name="Zibat A."/>
            <person name="Lombardot T."/>
            <person name="Becker I."/>
            <person name="Amann J."/>
            <person name="Gellner K."/>
            <person name="Teeling H."/>
            <person name="Leuschner W.D."/>
            <person name="Gloeckner F.-O."/>
            <person name="Lupas A.N."/>
            <person name="Amann R."/>
            <person name="Klenk H.-P."/>
        </authorList>
    </citation>
    <scope>NUCLEOTIDE SEQUENCE [LARGE SCALE GENOMIC DNA]</scope>
    <source>
        <strain>DSM 12343 / LSv54</strain>
    </source>
</reference>
<organism>
    <name type="scientific">Desulfotalea psychrophila (strain LSv54 / DSM 12343)</name>
    <dbReference type="NCBI Taxonomy" id="177439"/>
    <lineage>
        <taxon>Bacteria</taxon>
        <taxon>Pseudomonadati</taxon>
        <taxon>Thermodesulfobacteriota</taxon>
        <taxon>Desulfobulbia</taxon>
        <taxon>Desulfobulbales</taxon>
        <taxon>Desulfocapsaceae</taxon>
        <taxon>Desulfotalea</taxon>
    </lineage>
</organism>
<proteinExistence type="inferred from homology"/>
<name>NRFA_DESPS</name>
<accession>Q6ARF1</accession>
<sequence length="508" mass="56824">MNKSYKILLTGSVIAIGAMGLMANSINSREAERKEINTGPVVQAEGVASKNEEWYRYYPREYDSWKQTKKSDKITDLLREKPQLAIIWAGYGFAKDYNAPRGHFYAIQDNINTLRTGAPTGPSNGPMPTACWTCKSPDVPRLMDEVGENEFFTGKWAKYGNQIVNPIGCADCHNSQTGNLGFSRPHLGRALEASGVNLDEITFQDMRTLVCAQCHVEYYFRPTEWTDKTGKTKTAKVVTLPWAKGLSAENMEEYYDEYSFKDWTHKISKAPMLKAQHPGYELFSKGIHAQNGVSCADCHMPYKQQGSIKYTDHNIGNPLDDIASTCLTCHRDSEKAFRDRVASKLERKEQLMKMAMDTLAAAHLEAGKAWELGATEAEMQPVLELLRSGQWLWDYSIASHGSFFHSPEETLRLLGVANDKGGKARIKLAAILAQHGLIGYQVPDFSTKEKAQALAGVPLQKLITEKKAFESTLLEQWNEEAVKAGRLDPKTLEGMSNKSSWSQTELSQ</sequence>
<protein>
    <recommendedName>
        <fullName evidence="1">Cytochrome c-552</fullName>
        <ecNumber evidence="1">1.7.2.2</ecNumber>
    </recommendedName>
    <alternativeName>
        <fullName evidence="1">Ammonia-forming cytochrome c nitrite reductase</fullName>
        <shortName evidence="1">Cytochrome c nitrite reductase</shortName>
    </alternativeName>
</protein>